<protein>
    <recommendedName>
        <fullName>[Butirosin acyl-carrier protein]--L-glutamate ligase</fullName>
        <ecNumber>6.2.1.39</ecNumber>
    </recommendedName>
    <alternativeName>
        <fullName>Butirosin biosynthesis protein J</fullName>
    </alternativeName>
</protein>
<dbReference type="EC" id="6.2.1.39"/>
<dbReference type="EMBL" id="AB097196">
    <property type="protein sequence ID" value="BAE07074.1"/>
    <property type="molecule type" value="Genomic_DNA"/>
</dbReference>
<dbReference type="EMBL" id="AJ781030">
    <property type="protein sequence ID" value="CAG77428.2"/>
    <property type="molecule type" value="Genomic_DNA"/>
</dbReference>
<dbReference type="SMR" id="Q4H4E7"/>
<dbReference type="KEGG" id="ag:BAE07074"/>
<dbReference type="BioCyc" id="MetaCyc:MONOMER-17271"/>
<dbReference type="BRENDA" id="6.2.1.39">
    <property type="organism ID" value="649"/>
</dbReference>
<dbReference type="UniPathway" id="UPA00964"/>
<dbReference type="GO" id="GO:0016878">
    <property type="term" value="F:acid-thiol ligase activity"/>
    <property type="evidence" value="ECO:0000314"/>
    <property type="project" value="UniProtKB"/>
</dbReference>
<dbReference type="GO" id="GO:0005524">
    <property type="term" value="F:ATP binding"/>
    <property type="evidence" value="ECO:0007669"/>
    <property type="project" value="UniProtKB-KW"/>
</dbReference>
<dbReference type="GO" id="GO:0046872">
    <property type="term" value="F:metal ion binding"/>
    <property type="evidence" value="ECO:0007669"/>
    <property type="project" value="UniProtKB-KW"/>
</dbReference>
<dbReference type="GO" id="GO:0017000">
    <property type="term" value="P:antibiotic biosynthetic process"/>
    <property type="evidence" value="ECO:0000314"/>
    <property type="project" value="UniProtKB"/>
</dbReference>
<dbReference type="FunFam" id="3.30.470.20:FF:000139">
    <property type="entry name" value="[Butirosin acyl-carrier protein]--L-glutamate ligase"/>
    <property type="match status" value="1"/>
</dbReference>
<dbReference type="Gene3D" id="3.30.470.20">
    <property type="entry name" value="ATP-grasp fold, B domain"/>
    <property type="match status" value="1"/>
</dbReference>
<dbReference type="InterPro" id="IPR011761">
    <property type="entry name" value="ATP-grasp"/>
</dbReference>
<dbReference type="InterPro" id="IPR003806">
    <property type="entry name" value="ATP-grasp_PylC-type"/>
</dbReference>
<dbReference type="Pfam" id="PF02655">
    <property type="entry name" value="ATP-grasp_3"/>
    <property type="match status" value="1"/>
</dbReference>
<dbReference type="SUPFAM" id="SSF56059">
    <property type="entry name" value="Glutathione synthetase ATP-binding domain-like"/>
    <property type="match status" value="1"/>
</dbReference>
<dbReference type="PROSITE" id="PS50975">
    <property type="entry name" value="ATP_GRASP"/>
    <property type="match status" value="1"/>
</dbReference>
<accession>Q4H4E7</accession>
<evidence type="ECO:0000255" key="1">
    <source>
        <dbReference type="PROSITE-ProRule" id="PRU00409"/>
    </source>
</evidence>
<evidence type="ECO:0000269" key="2">
    <source>
    </source>
</evidence>
<evidence type="ECO:0000305" key="3">
    <source>
    </source>
</evidence>
<name>BTRJ_NIACI</name>
<gene>
    <name type="primary">btrJ</name>
</gene>
<feature type="chain" id="PRO_0000421731" description="[Butirosin acyl-carrier protein]--L-glutamate ligase">
    <location>
        <begin position="1"/>
        <end position="419"/>
    </location>
</feature>
<feature type="domain" description="ATP-grasp" evidence="1">
    <location>
        <begin position="144"/>
        <end position="345"/>
    </location>
</feature>
<feature type="binding site" evidence="1">
    <location>
        <begin position="174"/>
        <end position="231"/>
    </location>
    <ligand>
        <name>ATP</name>
        <dbReference type="ChEBI" id="CHEBI:30616"/>
    </ligand>
</feature>
<feature type="binding site" evidence="1">
    <location>
        <position position="298"/>
    </location>
    <ligand>
        <name>Mg(2+)</name>
        <dbReference type="ChEBI" id="CHEBI:18420"/>
        <label>1</label>
    </ligand>
</feature>
<feature type="binding site" evidence="1">
    <location>
        <position position="298"/>
    </location>
    <ligand>
        <name>Mn(2+)</name>
        <dbReference type="ChEBI" id="CHEBI:29035"/>
        <label>1</label>
    </ligand>
</feature>
<feature type="binding site" evidence="1">
    <location>
        <position position="312"/>
    </location>
    <ligand>
        <name>Mg(2+)</name>
        <dbReference type="ChEBI" id="CHEBI:18420"/>
        <label>1</label>
    </ligand>
</feature>
<feature type="binding site" evidence="1">
    <location>
        <position position="312"/>
    </location>
    <ligand>
        <name>Mg(2+)</name>
        <dbReference type="ChEBI" id="CHEBI:18420"/>
        <label>2</label>
    </ligand>
</feature>
<feature type="binding site" evidence="1">
    <location>
        <position position="312"/>
    </location>
    <ligand>
        <name>Mn(2+)</name>
        <dbReference type="ChEBI" id="CHEBI:29035"/>
        <label>1</label>
    </ligand>
</feature>
<feature type="binding site" evidence="1">
    <location>
        <position position="312"/>
    </location>
    <ligand>
        <name>Mn(2+)</name>
        <dbReference type="ChEBI" id="CHEBI:29035"/>
        <label>2</label>
    </ligand>
</feature>
<feature type="binding site" evidence="1">
    <location>
        <position position="314"/>
    </location>
    <ligand>
        <name>Mg(2+)</name>
        <dbReference type="ChEBI" id="CHEBI:18420"/>
        <label>2</label>
    </ligand>
</feature>
<feature type="binding site" evidence="1">
    <location>
        <position position="314"/>
    </location>
    <ligand>
        <name>Mn(2+)</name>
        <dbReference type="ChEBI" id="CHEBI:29035"/>
        <label>2</label>
    </ligand>
</feature>
<reference key="1">
    <citation type="journal article" date="2005" name="J. Antibiot.">
        <title>Extended sequence and functional analysis of the butirosin biosynthetic gene cluster in Bacillus circulans SANK 72073.</title>
        <authorList>
            <person name="Kudo F."/>
            <person name="Numakura M."/>
            <person name="Tamegai H."/>
            <person name="Yamamoto H."/>
            <person name="Eguchi T."/>
            <person name="Kakinuma K."/>
        </authorList>
    </citation>
    <scope>NUCLEOTIDE SEQUENCE [GENOMIC DNA]</scope>
    <source>
        <strain>ATCC 21557 / NCIMB 12336 / BU-1709-YQW-B6</strain>
    </source>
</reference>
<reference key="2">
    <citation type="submission" date="2004-06" db="EMBL/GenBank/DDBJ databases">
        <title>Analysis and comparison of the biosynthetic gene clusters for the 2-deoxystreptamine-containing aminoglycoside antibiotics ribostamycin, neomycin, lividomycin, paromomycin and butirosin.</title>
        <authorList>
            <person name="Aboshanab K.M."/>
            <person name="Schmidt-Beissner H."/>
            <person name="Wehmeier U.F."/>
            <person name="Welzel K."/>
            <person name="Vente A."/>
            <person name="Piepersberg W."/>
        </authorList>
    </citation>
    <scope>NUCLEOTIDE SEQUENCE [GENOMIC DNA]</scope>
    <source>
        <strain>ATCC 21557 / NCIMB 12336 / BU-1709-YQW-B6</strain>
    </source>
</reference>
<reference key="3">
    <citation type="journal article" date="2005" name="Chem. Biol.">
        <title>Biosynthesis of the unique amino acid side chain of butirosin: possible protective-group chemistry in an acyl carrier protein-mediated pathway.</title>
        <authorList>
            <person name="Li Y."/>
            <person name="Llewellyn N.M."/>
            <person name="Giri R."/>
            <person name="Huang F."/>
            <person name="Spencer J.B."/>
        </authorList>
    </citation>
    <scope>FUNCTION</scope>
    <scope>CATALYTIC ACTIVITY</scope>
    <scope>PATHWAY</scope>
    <scope>COFACTOR</scope>
    <scope>SUBUNIT</scope>
    <source>
        <strain>ATCC 21557 / NCIMB 12336 / BU-1709-YQW-B6</strain>
    </source>
</reference>
<organism>
    <name type="scientific">Niallia circulans</name>
    <name type="common">Bacillus circulans</name>
    <dbReference type="NCBI Taxonomy" id="1397"/>
    <lineage>
        <taxon>Bacteria</taxon>
        <taxon>Bacillati</taxon>
        <taxon>Bacillota</taxon>
        <taxon>Bacilli</taxon>
        <taxon>Bacillales</taxon>
        <taxon>Bacillaceae</taxon>
        <taxon>Niallia</taxon>
    </lineage>
</organism>
<proteinExistence type="evidence at protein level"/>
<sequence length="419" mass="48648">MKFTHPLDYYRLNGKQILWYMNIGEDQDSQASNYFPSVKDPQSEKIVVQQEQQLLFLARPQDTVFFHTMPEQAFLDYWKERRLSLPSIICCDKLSQVPDLERYTIIPFIVSDQLLELKRRYPHMDIIAPDLAVCREINHKFNTRRLMERNGFNVTTGYFCSDIESLEHAYEQLISAGFSKCVLKVPYGSSGKGLKVIDNERNFRFLLNYIQNRQTNVDLLLEGWHPHRLSLTSQLFITEYEVHLLAVTEQIIDPNGVYKGTNFTPALSQSEAADYREEILRAGELIRQMGYRGVLGIDSILDTNGELIPVIEINARLTQVTYILPLVIEQKKRYEFVESRVLVFNSRADLDFEDYENDLSEVTRDLPVRIDLYNFCKASGAFKNTYKLFVLVSAHNSEQLIKARSLLDELNTKMTTAVH</sequence>
<comment type="function">
    <text evidence="2">ATP-dependent ligase that catalyzes 2 steps in the biosynthesis of the side chain of the aminoglycoside antibiotics in the biosynthetic pathway of butirosin. Mediates the addition of one molecule of L-glutamate to a dedicated acyl-carrier protein. Following decarboxylation of the product by BtrK, adds a second L-glutamate molecule.</text>
</comment>
<comment type="catalytic activity">
    <reaction evidence="2">
        <text>holo-[BtrI ACP] + L-glutamate + ATP = gamma-L-glutamyl-[BtrI ACP] + ADP + phosphate</text>
        <dbReference type="Rhea" id="RHEA:53948"/>
        <dbReference type="Rhea" id="RHEA-COMP:13741"/>
        <dbReference type="Rhea" id="RHEA-COMP:13742"/>
        <dbReference type="ChEBI" id="CHEBI:29985"/>
        <dbReference type="ChEBI" id="CHEBI:30616"/>
        <dbReference type="ChEBI" id="CHEBI:43474"/>
        <dbReference type="ChEBI" id="CHEBI:64479"/>
        <dbReference type="ChEBI" id="CHEBI:137996"/>
        <dbReference type="ChEBI" id="CHEBI:456216"/>
        <dbReference type="EC" id="6.2.1.39"/>
    </reaction>
</comment>
<comment type="catalytic activity">
    <reaction evidence="2">
        <text>4-aminobutanoyl-[BtrI ACP] + L-glutamate + ATP = 4-(gamma-L-glutamylamino)butanoyl-[BtrI ACP] + ADP + phosphate + H(+)</text>
        <dbReference type="Rhea" id="RHEA:53952"/>
        <dbReference type="Rhea" id="RHEA-COMP:13744"/>
        <dbReference type="Rhea" id="RHEA-COMP:13745"/>
        <dbReference type="ChEBI" id="CHEBI:15378"/>
        <dbReference type="ChEBI" id="CHEBI:29985"/>
        <dbReference type="ChEBI" id="CHEBI:30616"/>
        <dbReference type="ChEBI" id="CHEBI:43474"/>
        <dbReference type="ChEBI" id="CHEBI:137997"/>
        <dbReference type="ChEBI" id="CHEBI:137998"/>
        <dbReference type="ChEBI" id="CHEBI:456216"/>
        <dbReference type="EC" id="6.2.1.39"/>
    </reaction>
</comment>
<comment type="cofactor">
    <cofactor evidence="3">
        <name>Mg(2+)</name>
        <dbReference type="ChEBI" id="CHEBI:18420"/>
    </cofactor>
    <cofactor evidence="3">
        <name>Mn(2+)</name>
        <dbReference type="ChEBI" id="CHEBI:29035"/>
    </cofactor>
    <text evidence="3">Binds 2 magnesium or manganese ions per subunit.</text>
</comment>
<comment type="pathway">
    <text evidence="2">Antibiotic biosynthesis; butirosin biosynthesis.</text>
</comment>
<comment type="subunit">
    <text evidence="2">Monomer.</text>
</comment>
<keyword id="KW-0045">Antibiotic biosynthesis</keyword>
<keyword id="KW-0067">ATP-binding</keyword>
<keyword id="KW-0436">Ligase</keyword>
<keyword id="KW-0460">Magnesium</keyword>
<keyword id="KW-0464">Manganese</keyword>
<keyword id="KW-0479">Metal-binding</keyword>
<keyword id="KW-0547">Nucleotide-binding</keyword>